<proteinExistence type="evidence at protein level"/>
<feature type="chain" id="PRO_0000456567" description="Small ribosomal subunit protein eS30">
    <location>
        <begin position="1"/>
        <end position="63"/>
    </location>
</feature>
<feature type="region of interest" description="Disordered" evidence="1">
    <location>
        <begin position="1"/>
        <end position="33"/>
    </location>
</feature>
<reference key="1">
    <citation type="journal article" date="2004" name="Proc. Natl. Acad. Sci. U.S.A.">
        <title>The diploid genome sequence of Candida albicans.</title>
        <authorList>
            <person name="Jones T."/>
            <person name="Federspiel N.A."/>
            <person name="Chibana H."/>
            <person name="Dungan J."/>
            <person name="Kalman S."/>
            <person name="Magee B.B."/>
            <person name="Newport G."/>
            <person name="Thorstenson Y.R."/>
            <person name="Agabian N."/>
            <person name="Magee P.T."/>
            <person name="Davis R.W."/>
            <person name="Scherer S."/>
        </authorList>
    </citation>
    <scope>NUCLEOTIDE SEQUENCE [LARGE SCALE GENOMIC DNA]</scope>
    <source>
        <strain>SC5314 / ATCC MYA-2876</strain>
    </source>
</reference>
<reference key="2">
    <citation type="journal article" date="2007" name="Genome Biol.">
        <title>Assembly of the Candida albicans genome into sixteen supercontigs aligned on the eight chromosomes.</title>
        <authorList>
            <person name="van het Hoog M."/>
            <person name="Rast T.J."/>
            <person name="Martchenko M."/>
            <person name="Grindle S."/>
            <person name="Dignard D."/>
            <person name="Hogues H."/>
            <person name="Cuomo C."/>
            <person name="Berriman M."/>
            <person name="Scherer S."/>
            <person name="Magee B.B."/>
            <person name="Whiteway M."/>
            <person name="Chibana H."/>
            <person name="Nantel A."/>
            <person name="Magee P.T."/>
        </authorList>
    </citation>
    <scope>GENOME REANNOTATION</scope>
    <source>
        <strain>SC5314 / ATCC MYA-2876</strain>
    </source>
</reference>
<reference key="3">
    <citation type="journal article" date="2013" name="Genome Biol.">
        <title>Assembly of a phased diploid Candida albicans genome facilitates allele-specific measurements and provides a simple model for repeat and indel structure.</title>
        <authorList>
            <person name="Muzzey D."/>
            <person name="Schwartz K."/>
            <person name="Weissman J.S."/>
            <person name="Sherlock G."/>
        </authorList>
    </citation>
    <scope>NUCLEOTIDE SEQUENCE [LARGE SCALE GENOMIC DNA]</scope>
    <scope>GENOME REANNOTATION</scope>
    <source>
        <strain>SC5314 / ATCC MYA-2876</strain>
    </source>
</reference>
<reference evidence="6 7 8" key="4">
    <citation type="journal article" date="2022" name="Sci. Adv.">
        <title>E-site drug specificity of the human pathogen Candida albicans ribosome.</title>
        <authorList>
            <person name="Zgadzay Y."/>
            <person name="Kolosova O."/>
            <person name="Stetsenko A."/>
            <person name="Wu C."/>
            <person name="Bruchlen D."/>
            <person name="Usachev K."/>
            <person name="Validov S."/>
            <person name="Jenner L."/>
            <person name="Rogachev A."/>
            <person name="Yusupova G."/>
            <person name="Sachs M.S."/>
            <person name="Guskov A."/>
            <person name="Yusupov M."/>
        </authorList>
    </citation>
    <scope>STRUCTURE BY ELECTRON MICROSCOPY (2.32 ANGSTROMS) OF THE 80S RIBOSOME</scope>
    <scope>SUBUNIT</scope>
</reference>
<keyword id="KW-0002">3D-structure</keyword>
<keyword id="KW-0963">Cytoplasm</keyword>
<keyword id="KW-1185">Reference proteome</keyword>
<keyword id="KW-0687">Ribonucleoprotein</keyword>
<keyword id="KW-0689">Ribosomal protein</keyword>
<sequence>MGKVHGSLARAGKVKSQTPKVEKQEKPKKPQGRAYMRLLYTRRFVNVTLTNGKRKMNPSPASQ</sequence>
<comment type="function">
    <text evidence="5">Component of the ribosome, a large ribonucleoprotein complex responsible for the synthesis of proteins in the cell. The small ribosomal subunit (SSU) binds messenger RNAs (mRNAs) and translates the encoded message by selecting cognate aminoacyl-transfer RNA (tRNA) molecules. The large subunit (LSU) contains the ribosomal catalytic site termed the peptidyl transferase center (PTC), which catalyzes the formation of peptide bonds, thereby polymerizing the amino acids delivered by tRNAs into a polypeptide chain. The nascent polypeptides leave the ribosome through a tunnel in the LSU and interact with protein factors that function in enzymatic processing, targeting, and the membrane insertion of nascent chains at the exit of the ribosomal tunnel.</text>
</comment>
<comment type="subunit">
    <text evidence="2">Component of the small ribosomal subunit (PubMed:35613268). Mature ribosomes consist of a small (40S) and a large (60S) subunit (PubMed:35613268). The 40S subunit contains about 32 different proteins and 1 molecule of RNA (18S) (PubMed:35613268). The 60S subunit contains 45 different proteins and 3 molecules of RNA (25S, 5.8S and 5S) (PubMed:35613268).</text>
</comment>
<comment type="subcellular location">
    <subcellularLocation>
        <location evidence="5">Cytoplasm</location>
    </subcellularLocation>
</comment>
<comment type="similarity">
    <text evidence="4">Belongs to the eukaryotic ribosomal protein eS30 family.</text>
</comment>
<protein>
    <recommendedName>
        <fullName evidence="3">Small ribosomal subunit protein eS30</fullName>
    </recommendedName>
    <alternativeName>
        <fullName>40S ribosomal protein S30</fullName>
    </alternativeName>
</protein>
<evidence type="ECO:0000256" key="1">
    <source>
        <dbReference type="SAM" id="MobiDB-lite"/>
    </source>
</evidence>
<evidence type="ECO:0000269" key="2">
    <source>
    </source>
</evidence>
<evidence type="ECO:0000303" key="3">
    <source>
    </source>
</evidence>
<evidence type="ECO:0000305" key="4"/>
<evidence type="ECO:0000305" key="5">
    <source>
    </source>
</evidence>
<evidence type="ECO:0007744" key="6">
    <source>
        <dbReference type="PDB" id="7PZY"/>
    </source>
</evidence>
<evidence type="ECO:0007744" key="7">
    <source>
        <dbReference type="PDB" id="7Q0F"/>
    </source>
</evidence>
<evidence type="ECO:0007744" key="8">
    <source>
        <dbReference type="PDB" id="7Q0P"/>
    </source>
</evidence>
<accession>A0A1D8PSK2</accession>
<organism>
    <name type="scientific">Candida albicans (strain SC5314 / ATCC MYA-2876)</name>
    <name type="common">Yeast</name>
    <dbReference type="NCBI Taxonomy" id="237561"/>
    <lineage>
        <taxon>Eukaryota</taxon>
        <taxon>Fungi</taxon>
        <taxon>Dikarya</taxon>
        <taxon>Ascomycota</taxon>
        <taxon>Saccharomycotina</taxon>
        <taxon>Pichiomycetes</taxon>
        <taxon>Debaryomycetaceae</taxon>
        <taxon>Candida/Lodderomyces clade</taxon>
        <taxon>Candida</taxon>
    </lineage>
</organism>
<gene>
    <name type="primary">RPS30</name>
    <name type="ordered locus">CAALFM_CR03770CA</name>
    <name type="ordered locus">orf19.4375.1</name>
</gene>
<name>RS30_CANAL</name>
<dbReference type="EMBL" id="CP017630">
    <property type="protein sequence ID" value="AOW31115.1"/>
    <property type="molecule type" value="Genomic_DNA"/>
</dbReference>
<dbReference type="RefSeq" id="XP_019331075.1">
    <property type="nucleotide sequence ID" value="XM_019475530.1"/>
</dbReference>
<dbReference type="PDB" id="7PZY">
    <property type="method" value="EM"/>
    <property type="resolution" value="2.32 A"/>
    <property type="chains" value="f=1-63"/>
</dbReference>
<dbReference type="PDB" id="7Q08">
    <property type="method" value="EM"/>
    <property type="resolution" value="2.56 A"/>
    <property type="chains" value="f=1-63"/>
</dbReference>
<dbReference type="PDB" id="7Q0F">
    <property type="method" value="EM"/>
    <property type="resolution" value="2.64 A"/>
    <property type="chains" value="f=1-63"/>
</dbReference>
<dbReference type="PDB" id="7Q0P">
    <property type="method" value="EM"/>
    <property type="resolution" value="2.77 A"/>
    <property type="chains" value="f=1-63"/>
</dbReference>
<dbReference type="PDB" id="7Q0R">
    <property type="method" value="EM"/>
    <property type="resolution" value="2.67 A"/>
    <property type="chains" value="f=1-63"/>
</dbReference>
<dbReference type="PDB" id="8C3A">
    <property type="method" value="X-ray"/>
    <property type="resolution" value="3.00 A"/>
    <property type="chains" value="DR/g=1-63"/>
</dbReference>
<dbReference type="PDB" id="8CQ7">
    <property type="method" value="X-ray"/>
    <property type="resolution" value="3.20 A"/>
    <property type="chains" value="DR/g=1-63"/>
</dbReference>
<dbReference type="PDB" id="8CQW">
    <property type="method" value="X-ray"/>
    <property type="resolution" value="3.05 A"/>
    <property type="chains" value="DR/g=1-63"/>
</dbReference>
<dbReference type="PDB" id="8CRE">
    <property type="method" value="X-ray"/>
    <property type="resolution" value="3.00 A"/>
    <property type="chains" value="DR/g=1-63"/>
</dbReference>
<dbReference type="PDB" id="8OEQ">
    <property type="method" value="X-ray"/>
    <property type="resolution" value="3.30 A"/>
    <property type="chains" value="DR/g=1-63"/>
</dbReference>
<dbReference type="PDB" id="8OGJ">
    <property type="method" value="EM"/>
    <property type="resolution" value="3.10 A"/>
    <property type="chains" value="f=1-63"/>
</dbReference>
<dbReference type="PDB" id="8OH6">
    <property type="method" value="X-ray"/>
    <property type="resolution" value="3.35 A"/>
    <property type="chains" value="DR/g=1-63"/>
</dbReference>
<dbReference type="PDB" id="8OI5">
    <property type="method" value="X-ray"/>
    <property type="resolution" value="2.90 A"/>
    <property type="chains" value="DR/g=1-63"/>
</dbReference>
<dbReference type="PDB" id="8OJ3">
    <property type="method" value="X-ray"/>
    <property type="resolution" value="3.50 A"/>
    <property type="chains" value="DR/g=1-63"/>
</dbReference>
<dbReference type="PDB" id="8Q5I">
    <property type="method" value="EM"/>
    <property type="resolution" value="2.45 A"/>
    <property type="chains" value="f=1-63"/>
</dbReference>
<dbReference type="PDBsum" id="7PZY"/>
<dbReference type="PDBsum" id="7Q08"/>
<dbReference type="PDBsum" id="7Q0F"/>
<dbReference type="PDBsum" id="7Q0P"/>
<dbReference type="PDBsum" id="7Q0R"/>
<dbReference type="PDBsum" id="8C3A"/>
<dbReference type="PDBsum" id="8CQ7"/>
<dbReference type="PDBsum" id="8CQW"/>
<dbReference type="PDBsum" id="8CRE"/>
<dbReference type="PDBsum" id="8OEQ"/>
<dbReference type="PDBsum" id="8OGJ"/>
<dbReference type="PDBsum" id="8OH6"/>
<dbReference type="PDBsum" id="8OI5"/>
<dbReference type="PDBsum" id="8OJ3"/>
<dbReference type="PDBsum" id="8Q5I"/>
<dbReference type="EMDB" id="EMD-13737"/>
<dbReference type="EMDB" id="EMD-13741"/>
<dbReference type="EMDB" id="EMD-13744"/>
<dbReference type="EMDB" id="EMD-13749"/>
<dbReference type="EMDB" id="EMD-13750"/>
<dbReference type="EMDB" id="EMD-16874"/>
<dbReference type="SMR" id="A0A1D8PSK2"/>
<dbReference type="FunCoup" id="A0A1D8PSK2">
    <property type="interactions" value="440"/>
</dbReference>
<dbReference type="STRING" id="237561.A0A1D8PSK2"/>
<dbReference type="EnsemblFungi" id="CR_03770C_A-T">
    <property type="protein sequence ID" value="CR_03770C_A-T-p1"/>
    <property type="gene ID" value="CR_03770C_A"/>
</dbReference>
<dbReference type="GeneID" id="30515390"/>
<dbReference type="KEGG" id="cal:CAALFM_CR03770CA"/>
<dbReference type="CGD" id="CAL0000193815">
    <property type="gene designation" value="RPS30"/>
</dbReference>
<dbReference type="VEuPathDB" id="FungiDB:CR_03770C_A"/>
<dbReference type="InParanoid" id="A0A1D8PSK2"/>
<dbReference type="OMA" id="YNTQNVP"/>
<dbReference type="OrthoDB" id="199599at2759"/>
<dbReference type="Proteomes" id="UP000000559">
    <property type="component" value="Chromosome R"/>
</dbReference>
<dbReference type="GO" id="GO:0022627">
    <property type="term" value="C:cytosolic small ribosomal subunit"/>
    <property type="evidence" value="ECO:0000318"/>
    <property type="project" value="GO_Central"/>
</dbReference>
<dbReference type="GO" id="GO:0003735">
    <property type="term" value="F:structural constituent of ribosome"/>
    <property type="evidence" value="ECO:0007669"/>
    <property type="project" value="InterPro"/>
</dbReference>
<dbReference type="GO" id="GO:0006412">
    <property type="term" value="P:translation"/>
    <property type="evidence" value="ECO:0007669"/>
    <property type="project" value="InterPro"/>
</dbReference>
<dbReference type="InterPro" id="IPR006846">
    <property type="entry name" value="Ribosomal_eS30"/>
</dbReference>
<dbReference type="PANTHER" id="PTHR12650">
    <property type="entry name" value="40S RIBOSOMAL PROTEIN S30/UBIQUITIN-LIKE PROTEIN FUBI"/>
    <property type="match status" value="1"/>
</dbReference>
<dbReference type="PANTHER" id="PTHR12650:SF15">
    <property type="entry name" value="RIBOSOMAL PROTEIN S30, ISOFORM A"/>
    <property type="match status" value="1"/>
</dbReference>
<dbReference type="Pfam" id="PF04758">
    <property type="entry name" value="Ribosomal_S30"/>
    <property type="match status" value="1"/>
</dbReference>